<comment type="function">
    <text evidence="1">Inhibits the expression or activity of extracellular murein hydrolases by interacting, possibly with LrgA, with the holin-like protein CidA. The LrgAB and CidA proteins may affect the proton motive force of the membrane. May be involved in programmed cell death (PCD), possibly triggering PCD in response to antibiotics and environmental stresses.</text>
</comment>
<comment type="subcellular location">
    <subcellularLocation>
        <location evidence="1">Cell membrane</location>
        <topology evidence="1">Multi-pass membrane protein</topology>
    </subcellularLocation>
</comment>
<comment type="similarity">
    <text evidence="1">Belongs to the CidB/LrgB family. LrgB subfamily.</text>
</comment>
<organism>
    <name type="scientific">Bacillus cereus (strain 03BB102)</name>
    <dbReference type="NCBI Taxonomy" id="572264"/>
    <lineage>
        <taxon>Bacteria</taxon>
        <taxon>Bacillati</taxon>
        <taxon>Bacillota</taxon>
        <taxon>Bacilli</taxon>
        <taxon>Bacillales</taxon>
        <taxon>Bacillaceae</taxon>
        <taxon>Bacillus</taxon>
        <taxon>Bacillus cereus group</taxon>
    </lineage>
</organism>
<protein>
    <recommendedName>
        <fullName evidence="1">Antiholin-like protein LrgB</fullName>
    </recommendedName>
</protein>
<evidence type="ECO:0000255" key="1">
    <source>
        <dbReference type="HAMAP-Rule" id="MF_01142"/>
    </source>
</evidence>
<sequence>MASTMTPYFGIVVSLIAYGIGTLLFKHSKGFFLFTPLFVAMVLGIVFLKVGNFTFEEYNTGGKMISFFLEPATIAFAIPLYKQVDKLKKYWWQILSAIVVGSICSVIVVFIVAKAIGLDTAVMNSMLPQAATTAIALPISESIGGIPAITSFAVIFNAVIVYALGALFLKTFRVKHPIAKGLALGTAGHALGVAVGIEMGEVEAAMASIAVTVVGVVTVVVIPMFMPFIG</sequence>
<reference key="1">
    <citation type="submission" date="2009-02" db="EMBL/GenBank/DDBJ databases">
        <title>Genome sequence of Bacillus cereus 03BB102.</title>
        <authorList>
            <person name="Dodson R.J."/>
            <person name="Jackson P."/>
            <person name="Munk A.C."/>
            <person name="Brettin T."/>
            <person name="Bruce D."/>
            <person name="Detter C."/>
            <person name="Tapia R."/>
            <person name="Han C."/>
            <person name="Sutton G."/>
            <person name="Sims D."/>
        </authorList>
    </citation>
    <scope>NUCLEOTIDE SEQUENCE [LARGE SCALE GENOMIC DNA]</scope>
    <source>
        <strain>03BB102</strain>
    </source>
</reference>
<dbReference type="EMBL" id="CP001407">
    <property type="protein sequence ID" value="ACO29885.1"/>
    <property type="molecule type" value="Genomic_DNA"/>
</dbReference>
<dbReference type="RefSeq" id="WP_000168869.1">
    <property type="nucleotide sequence ID" value="NZ_CP009318.1"/>
</dbReference>
<dbReference type="GeneID" id="93005687"/>
<dbReference type="KEGG" id="bcx:BCA_5590"/>
<dbReference type="PATRIC" id="fig|572264.18.peg.17"/>
<dbReference type="Proteomes" id="UP000002210">
    <property type="component" value="Chromosome"/>
</dbReference>
<dbReference type="GO" id="GO:0005886">
    <property type="term" value="C:plasma membrane"/>
    <property type="evidence" value="ECO:0007669"/>
    <property type="project" value="UniProtKB-SubCell"/>
</dbReference>
<dbReference type="GO" id="GO:0019835">
    <property type="term" value="P:cytolysis"/>
    <property type="evidence" value="ECO:0007669"/>
    <property type="project" value="UniProtKB-UniRule"/>
</dbReference>
<dbReference type="GO" id="GO:0031640">
    <property type="term" value="P:killing of cells of another organism"/>
    <property type="evidence" value="ECO:0007669"/>
    <property type="project" value="UniProtKB-KW"/>
</dbReference>
<dbReference type="GO" id="GO:0012501">
    <property type="term" value="P:programmed cell death"/>
    <property type="evidence" value="ECO:0007669"/>
    <property type="project" value="UniProtKB-UniRule"/>
</dbReference>
<dbReference type="HAMAP" id="MF_01142">
    <property type="entry name" value="LrgB"/>
    <property type="match status" value="1"/>
</dbReference>
<dbReference type="InterPro" id="IPR024891">
    <property type="entry name" value="Antiholin-like_LrgB"/>
</dbReference>
<dbReference type="InterPro" id="IPR007300">
    <property type="entry name" value="CidB/LrgB"/>
</dbReference>
<dbReference type="NCBIfam" id="NF003291">
    <property type="entry name" value="PRK04288.1"/>
    <property type="match status" value="1"/>
</dbReference>
<dbReference type="PANTHER" id="PTHR30249:SF0">
    <property type="entry name" value="PLASTIDAL GLYCOLATE_GLYCERATE TRANSLOCATOR 1, CHLOROPLASTIC"/>
    <property type="match status" value="1"/>
</dbReference>
<dbReference type="PANTHER" id="PTHR30249">
    <property type="entry name" value="PUTATIVE SEROTONIN TRANSPORTER"/>
    <property type="match status" value="1"/>
</dbReference>
<dbReference type="Pfam" id="PF04172">
    <property type="entry name" value="LrgB"/>
    <property type="match status" value="1"/>
</dbReference>
<proteinExistence type="inferred from homology"/>
<name>LRGB_BACC3</name>
<feature type="chain" id="PRO_1000164102" description="Antiholin-like protein LrgB">
    <location>
        <begin position="1"/>
        <end position="230"/>
    </location>
</feature>
<feature type="transmembrane region" description="Helical" evidence="1">
    <location>
        <begin position="5"/>
        <end position="25"/>
    </location>
</feature>
<feature type="transmembrane region" description="Helical" evidence="1">
    <location>
        <begin position="30"/>
        <end position="50"/>
    </location>
</feature>
<feature type="transmembrane region" description="Helical" evidence="1">
    <location>
        <begin position="61"/>
        <end position="81"/>
    </location>
</feature>
<feature type="transmembrane region" description="Helical" evidence="1">
    <location>
        <begin position="92"/>
        <end position="112"/>
    </location>
</feature>
<feature type="transmembrane region" description="Helical" evidence="1">
    <location>
        <begin position="149"/>
        <end position="169"/>
    </location>
</feature>
<feature type="transmembrane region" description="Helical" evidence="1">
    <location>
        <begin position="177"/>
        <end position="197"/>
    </location>
</feature>
<feature type="transmembrane region" description="Helical" evidence="1">
    <location>
        <begin position="209"/>
        <end position="229"/>
    </location>
</feature>
<accession>C1ER33</accession>
<keyword id="KW-1003">Cell membrane</keyword>
<keyword id="KW-0204">Cytolysis</keyword>
<keyword id="KW-0472">Membrane</keyword>
<keyword id="KW-0812">Transmembrane</keyword>
<keyword id="KW-1133">Transmembrane helix</keyword>
<gene>
    <name evidence="1" type="primary">lrgB</name>
    <name type="ordered locus">BCA_5590</name>
</gene>